<accession>O79936</accession>
<reference key="1">
    <citation type="journal article" date="1998" name="Auk">
        <title>Phylogenetic relationships among trogons.</title>
        <authorList>
            <person name="Espinosa de los Monteros A."/>
        </authorList>
    </citation>
    <scope>NUCLEOTIDE SEQUENCE [GENOMIC DNA]</scope>
</reference>
<reference key="2">
    <citation type="journal article" date="2000" name="Mol. Phylogenet. Evol.">
        <title>Higher-level phylogeny of trogoniformes.</title>
        <authorList>
            <person name="Espinosa de los Monteros A."/>
        </authorList>
    </citation>
    <scope>NUCLEOTIDE SEQUENCE [GENOMIC DNA]</scope>
</reference>
<geneLocation type="mitochondrion"/>
<evidence type="ECO:0000250" key="1"/>
<evidence type="ECO:0000250" key="2">
    <source>
        <dbReference type="UniProtKB" id="P00157"/>
    </source>
</evidence>
<evidence type="ECO:0000255" key="3">
    <source>
        <dbReference type="PROSITE-ProRule" id="PRU00967"/>
    </source>
</evidence>
<evidence type="ECO:0000255" key="4">
    <source>
        <dbReference type="PROSITE-ProRule" id="PRU00968"/>
    </source>
</evidence>
<protein>
    <recommendedName>
        <fullName>Cytochrome b</fullName>
    </recommendedName>
    <alternativeName>
        <fullName>Complex III subunit 3</fullName>
    </alternativeName>
    <alternativeName>
        <fullName>Complex III subunit III</fullName>
    </alternativeName>
    <alternativeName>
        <fullName>Cytochrome b-c1 complex subunit 3</fullName>
    </alternativeName>
    <alternativeName>
        <fullName>Ubiquinol-cytochrome-c reductase complex cytochrome b subunit</fullName>
    </alternativeName>
</protein>
<keyword id="KW-0249">Electron transport</keyword>
<keyword id="KW-0349">Heme</keyword>
<keyword id="KW-0408">Iron</keyword>
<keyword id="KW-0472">Membrane</keyword>
<keyword id="KW-0479">Metal-binding</keyword>
<keyword id="KW-0496">Mitochondrion</keyword>
<keyword id="KW-0999">Mitochondrion inner membrane</keyword>
<keyword id="KW-0679">Respiratory chain</keyword>
<keyword id="KW-0812">Transmembrane</keyword>
<keyword id="KW-1133">Transmembrane helix</keyword>
<keyword id="KW-0813">Transport</keyword>
<keyword id="KW-0830">Ubiquinone</keyword>
<comment type="function">
    <text evidence="2">Component of the ubiquinol-cytochrome c reductase complex (complex III or cytochrome b-c1 complex) that is part of the mitochondrial respiratory chain. The b-c1 complex mediates electron transfer from ubiquinol to cytochrome c. Contributes to the generation of a proton gradient across the mitochondrial membrane that is then used for ATP synthesis.</text>
</comment>
<comment type="cofactor">
    <cofactor evidence="2">
        <name>heme b</name>
        <dbReference type="ChEBI" id="CHEBI:60344"/>
    </cofactor>
    <text evidence="2">Binds 2 heme b groups non-covalently.</text>
</comment>
<comment type="subunit">
    <text evidence="2">The cytochrome bc1 complex contains 11 subunits: 3 respiratory subunits (MT-CYB, CYC1 and UQCRFS1), 2 core proteins (UQCRC1 and UQCRC2) and 6 low-molecular weight proteins (UQCRH/QCR6, UQCRB/QCR7, UQCRQ/QCR8, UQCR10/QCR9, UQCR11/QCR10 and a cleavage product of UQCRFS1). This cytochrome bc1 complex then forms a dimer.</text>
</comment>
<comment type="subcellular location">
    <subcellularLocation>
        <location evidence="2">Mitochondrion inner membrane</location>
        <topology evidence="2">Multi-pass membrane protein</topology>
    </subcellularLocation>
</comment>
<comment type="miscellaneous">
    <text evidence="1">Heme 1 (or BL or b562) is low-potential and absorbs at about 562 nm, and heme 2 (or BH or b566) is high-potential and absorbs at about 566 nm.</text>
</comment>
<comment type="similarity">
    <text evidence="3 4">Belongs to the cytochrome b family.</text>
</comment>
<comment type="caution">
    <text evidence="2">The full-length protein contains only eight transmembrane helices, not nine as predicted by bioinformatics tools.</text>
</comment>
<gene>
    <name type="primary">MT-CYB</name>
    <name type="synonym">COB</name>
    <name type="synonym">CYTB</name>
    <name type="synonym">MTCYB</name>
</gene>
<sequence length="380" mass="42644">MAPNIRKHHPLLKMINNSLIDLPTPSNISAWWNFGSLLGICLITQILTGLLLAAHYTADTTLAFSSVAHTCRNVQYGWLIRNLHANGASFFFICIYLHIGRGFYYGSYLFKETWNTGVTLLLTLMATAFVGYVLPWGQMSFWGATVITNLFSAIPYIGQTLVEWAWGGFSVDNPTLTRFFALHFLLPFMIAGLTLIHLTFLHESGSNNPLGIVSNSDKIPFHPYFSLKDILGFAIMLLLLTTLALFSPNLLGDPENFTPANPLVTPPHIKPEWYFLFAYAILRSIPNKLGGVLALAASVLILFLTPFLHKSKQRTMTFRPLSQLLFWLLVANLLILTWVGSQPVEHPFIIIGQMASITYFIIILVLFPMTSALENKMLNY</sequence>
<proteinExistence type="inferred from homology"/>
<feature type="chain" id="PRO_0000061377" description="Cytochrome b">
    <location>
        <begin position="1"/>
        <end position="380"/>
    </location>
</feature>
<feature type="transmembrane region" description="Helical" evidence="2">
    <location>
        <begin position="34"/>
        <end position="54"/>
    </location>
</feature>
<feature type="transmembrane region" description="Helical" evidence="2">
    <location>
        <begin position="78"/>
        <end position="99"/>
    </location>
</feature>
<feature type="transmembrane region" description="Helical" evidence="2">
    <location>
        <begin position="114"/>
        <end position="134"/>
    </location>
</feature>
<feature type="transmembrane region" description="Helical" evidence="2">
    <location>
        <begin position="179"/>
        <end position="199"/>
    </location>
</feature>
<feature type="transmembrane region" description="Helical" evidence="2">
    <location>
        <begin position="227"/>
        <end position="247"/>
    </location>
</feature>
<feature type="transmembrane region" description="Helical" evidence="2">
    <location>
        <begin position="289"/>
        <end position="309"/>
    </location>
</feature>
<feature type="transmembrane region" description="Helical" evidence="2">
    <location>
        <begin position="321"/>
        <end position="341"/>
    </location>
</feature>
<feature type="transmembrane region" description="Helical" evidence="2">
    <location>
        <begin position="348"/>
        <end position="368"/>
    </location>
</feature>
<feature type="binding site" description="axial binding residue" evidence="2">
    <location>
        <position position="84"/>
    </location>
    <ligand>
        <name>heme b</name>
        <dbReference type="ChEBI" id="CHEBI:60344"/>
        <label>b562</label>
    </ligand>
    <ligandPart>
        <name>Fe</name>
        <dbReference type="ChEBI" id="CHEBI:18248"/>
    </ligandPart>
</feature>
<feature type="binding site" description="axial binding residue" evidence="2">
    <location>
        <position position="98"/>
    </location>
    <ligand>
        <name>heme b</name>
        <dbReference type="ChEBI" id="CHEBI:60344"/>
        <label>b566</label>
    </ligand>
    <ligandPart>
        <name>Fe</name>
        <dbReference type="ChEBI" id="CHEBI:18248"/>
    </ligandPart>
</feature>
<feature type="binding site" description="axial binding residue" evidence="2">
    <location>
        <position position="183"/>
    </location>
    <ligand>
        <name>heme b</name>
        <dbReference type="ChEBI" id="CHEBI:60344"/>
        <label>b562</label>
    </ligand>
    <ligandPart>
        <name>Fe</name>
        <dbReference type="ChEBI" id="CHEBI:18248"/>
    </ligandPart>
</feature>
<feature type="binding site" description="axial binding residue" evidence="2">
    <location>
        <position position="197"/>
    </location>
    <ligand>
        <name>heme b</name>
        <dbReference type="ChEBI" id="CHEBI:60344"/>
        <label>b566</label>
    </ligand>
    <ligandPart>
        <name>Fe</name>
        <dbReference type="ChEBI" id="CHEBI:18248"/>
    </ligandPart>
</feature>
<feature type="binding site" evidence="2">
    <location>
        <position position="202"/>
    </location>
    <ligand>
        <name>a ubiquinone</name>
        <dbReference type="ChEBI" id="CHEBI:16389"/>
    </ligand>
</feature>
<dbReference type="EMBL" id="U89204">
    <property type="protein sequence ID" value="AAC35385.1"/>
    <property type="molecule type" value="Genomic_DNA"/>
</dbReference>
<dbReference type="SMR" id="O79936"/>
<dbReference type="GO" id="GO:0005743">
    <property type="term" value="C:mitochondrial inner membrane"/>
    <property type="evidence" value="ECO:0007669"/>
    <property type="project" value="UniProtKB-SubCell"/>
</dbReference>
<dbReference type="GO" id="GO:0045275">
    <property type="term" value="C:respiratory chain complex III"/>
    <property type="evidence" value="ECO:0007669"/>
    <property type="project" value="InterPro"/>
</dbReference>
<dbReference type="GO" id="GO:0046872">
    <property type="term" value="F:metal ion binding"/>
    <property type="evidence" value="ECO:0007669"/>
    <property type="project" value="UniProtKB-KW"/>
</dbReference>
<dbReference type="GO" id="GO:0008121">
    <property type="term" value="F:ubiquinol-cytochrome-c reductase activity"/>
    <property type="evidence" value="ECO:0007669"/>
    <property type="project" value="InterPro"/>
</dbReference>
<dbReference type="GO" id="GO:0006122">
    <property type="term" value="P:mitochondrial electron transport, ubiquinol to cytochrome c"/>
    <property type="evidence" value="ECO:0007669"/>
    <property type="project" value="TreeGrafter"/>
</dbReference>
<dbReference type="CDD" id="cd00290">
    <property type="entry name" value="cytochrome_b_C"/>
    <property type="match status" value="1"/>
</dbReference>
<dbReference type="CDD" id="cd00284">
    <property type="entry name" value="Cytochrome_b_N"/>
    <property type="match status" value="1"/>
</dbReference>
<dbReference type="FunFam" id="1.20.810.10:FF:000002">
    <property type="entry name" value="Cytochrome b"/>
    <property type="match status" value="1"/>
</dbReference>
<dbReference type="Gene3D" id="1.20.810.10">
    <property type="entry name" value="Cytochrome Bc1 Complex, Chain C"/>
    <property type="match status" value="1"/>
</dbReference>
<dbReference type="InterPro" id="IPR005798">
    <property type="entry name" value="Cyt_b/b6_C"/>
</dbReference>
<dbReference type="InterPro" id="IPR036150">
    <property type="entry name" value="Cyt_b/b6_C_sf"/>
</dbReference>
<dbReference type="InterPro" id="IPR005797">
    <property type="entry name" value="Cyt_b/b6_N"/>
</dbReference>
<dbReference type="InterPro" id="IPR027387">
    <property type="entry name" value="Cytb/b6-like_sf"/>
</dbReference>
<dbReference type="InterPro" id="IPR030689">
    <property type="entry name" value="Cytochrome_b"/>
</dbReference>
<dbReference type="InterPro" id="IPR048260">
    <property type="entry name" value="Cytochrome_b_C_euk/bac"/>
</dbReference>
<dbReference type="InterPro" id="IPR048259">
    <property type="entry name" value="Cytochrome_b_N_euk/bac"/>
</dbReference>
<dbReference type="InterPro" id="IPR016174">
    <property type="entry name" value="Di-haem_cyt_TM"/>
</dbReference>
<dbReference type="PANTHER" id="PTHR19271">
    <property type="entry name" value="CYTOCHROME B"/>
    <property type="match status" value="1"/>
</dbReference>
<dbReference type="PANTHER" id="PTHR19271:SF16">
    <property type="entry name" value="CYTOCHROME B"/>
    <property type="match status" value="1"/>
</dbReference>
<dbReference type="Pfam" id="PF00032">
    <property type="entry name" value="Cytochrom_B_C"/>
    <property type="match status" value="1"/>
</dbReference>
<dbReference type="Pfam" id="PF00033">
    <property type="entry name" value="Cytochrome_B"/>
    <property type="match status" value="1"/>
</dbReference>
<dbReference type="PIRSF" id="PIRSF038885">
    <property type="entry name" value="COB"/>
    <property type="match status" value="1"/>
</dbReference>
<dbReference type="SUPFAM" id="SSF81648">
    <property type="entry name" value="a domain/subunit of cytochrome bc1 complex (Ubiquinol-cytochrome c reductase)"/>
    <property type="match status" value="1"/>
</dbReference>
<dbReference type="SUPFAM" id="SSF81342">
    <property type="entry name" value="Transmembrane di-heme cytochromes"/>
    <property type="match status" value="1"/>
</dbReference>
<dbReference type="PROSITE" id="PS51003">
    <property type="entry name" value="CYTB_CTER"/>
    <property type="match status" value="1"/>
</dbReference>
<dbReference type="PROSITE" id="PS51002">
    <property type="entry name" value="CYTB_NTER"/>
    <property type="match status" value="1"/>
</dbReference>
<name>CYB_PHAAA</name>
<organism>
    <name type="scientific">Pharomachrus antisianus</name>
    <name type="common">Crested quetzal</name>
    <dbReference type="NCBI Taxonomy" id="57430"/>
    <lineage>
        <taxon>Eukaryota</taxon>
        <taxon>Metazoa</taxon>
        <taxon>Chordata</taxon>
        <taxon>Craniata</taxon>
        <taxon>Vertebrata</taxon>
        <taxon>Euteleostomi</taxon>
        <taxon>Archelosauria</taxon>
        <taxon>Archosauria</taxon>
        <taxon>Dinosauria</taxon>
        <taxon>Saurischia</taxon>
        <taxon>Theropoda</taxon>
        <taxon>Coelurosauria</taxon>
        <taxon>Aves</taxon>
        <taxon>Neognathae</taxon>
        <taxon>Neoaves</taxon>
        <taxon>Telluraves</taxon>
        <taxon>Coraciimorphae</taxon>
        <taxon>Trogoniformes</taxon>
        <taxon>Trogonidae</taxon>
        <taxon>Pharomachrus</taxon>
    </lineage>
</organism>